<organism>
    <name type="scientific">Oryza sativa subsp. japonica</name>
    <name type="common">Rice</name>
    <dbReference type="NCBI Taxonomy" id="39947"/>
    <lineage>
        <taxon>Eukaryota</taxon>
        <taxon>Viridiplantae</taxon>
        <taxon>Streptophyta</taxon>
        <taxon>Embryophyta</taxon>
        <taxon>Tracheophyta</taxon>
        <taxon>Spermatophyta</taxon>
        <taxon>Magnoliopsida</taxon>
        <taxon>Liliopsida</taxon>
        <taxon>Poales</taxon>
        <taxon>Poaceae</taxon>
        <taxon>BOP clade</taxon>
        <taxon>Oryzoideae</taxon>
        <taxon>Oryzeae</taxon>
        <taxon>Oryzinae</taxon>
        <taxon>Oryza</taxon>
        <taxon>Oryza sativa</taxon>
    </lineage>
</organism>
<gene>
    <name evidence="7" type="primary">XOAT9</name>
    <name evidence="6" type="synonym">TBL4</name>
    <name evidence="11" type="ordered locus">Os05g0356700</name>
    <name evidence="8" type="ordered locus">LOC_Os05g28830</name>
    <name evidence="10" type="ORF">OSJNBa0036C12.14</name>
</gene>
<comment type="function">
    <text evidence="5">Probable xylan acetyltransferase required for 2-O- and 3-O-monoacetylation of xylosyl residues in xylan (PubMed:29569182). Possesses extremely low activity in vitro (PubMed:29569182).</text>
</comment>
<comment type="subcellular location">
    <subcellularLocation>
        <location evidence="1">Golgi apparatus membrane</location>
        <topology evidence="3">Single-pass type II membrane protein</topology>
    </subcellularLocation>
</comment>
<comment type="similarity">
    <text evidence="8">Belongs to the PC-esterase family. TBL subfamily.</text>
</comment>
<evidence type="ECO:0000250" key="1">
    <source>
        <dbReference type="UniProtKB" id="Q2QYU2"/>
    </source>
</evidence>
<evidence type="ECO:0000250" key="2">
    <source>
        <dbReference type="UniProtKB" id="Q9LY46"/>
    </source>
</evidence>
<evidence type="ECO:0000255" key="3"/>
<evidence type="ECO:0000255" key="4">
    <source>
        <dbReference type="PROSITE-ProRule" id="PRU00498"/>
    </source>
</evidence>
<evidence type="ECO:0000269" key="5">
    <source>
    </source>
</evidence>
<evidence type="ECO:0000303" key="6">
    <source>
    </source>
</evidence>
<evidence type="ECO:0000303" key="7">
    <source>
    </source>
</evidence>
<evidence type="ECO:0000305" key="8"/>
<evidence type="ECO:0000305" key="9">
    <source>
    </source>
</evidence>
<evidence type="ECO:0000312" key="10">
    <source>
        <dbReference type="EMBL" id="AAV43944.1"/>
    </source>
</evidence>
<evidence type="ECO:0000312" key="11">
    <source>
        <dbReference type="EMBL" id="BAS93573.1"/>
    </source>
</evidence>
<accession>Q5W6Y3</accession>
<accession>Q0DIW6</accession>
<sequence length="454" mass="50621">MKAPPPPSPVAKRARVSPFVFLLVLFLLLFSFLYGEDLKELLGSQAQARPSLHFNAAAAGDGIELPAATAATTEGRTTTRRWRGRLPFAANGDGEEEEEECDVFSGRWVRDEAARPLYREADCPYIPAQLACEAHGRPETAYQRWRWQPRGCALPAFDAAAMLDRLRGKRVMFVGDSLGRGQFTSLVCLLLAAVPDPAARSFATSPDQQRSVFTAAAYNATVEFYWAPFLLQSNADNAAVHRISDRMVRRGSIGHHGRHWEGADVIVFNTYLWWCTGLQFRILEDGPFDAGGNSSTTTWVSTEEAYAMAFREMLQWAREHMDFATTRVFFTSMSPTHGKSQDWGGGEPGGNCYGETEMIGDAAYWGSDSRRGVMRAIGEVLDGDGADVPVTFLNVTQLSLYRKDAHTSVYKKQWTPPTPEQLADPKTYADCVHWCLPGLQDTWNELLYTKLFYP</sequence>
<proteinExistence type="evidence at protein level"/>
<dbReference type="EC" id="2.3.1.-" evidence="5"/>
<dbReference type="EMBL" id="MH037023">
    <property type="protein sequence ID" value="AVR54513.1"/>
    <property type="molecule type" value="mRNA"/>
</dbReference>
<dbReference type="EMBL" id="AC121363">
    <property type="protein sequence ID" value="AAV43944.1"/>
    <property type="molecule type" value="Genomic_DNA"/>
</dbReference>
<dbReference type="EMBL" id="AP008211">
    <property type="protein sequence ID" value="BAF17207.1"/>
    <property type="molecule type" value="Genomic_DNA"/>
</dbReference>
<dbReference type="EMBL" id="AP014961">
    <property type="protein sequence ID" value="BAS93573.1"/>
    <property type="molecule type" value="Genomic_DNA"/>
</dbReference>
<dbReference type="SMR" id="Q5W6Y3"/>
<dbReference type="FunCoup" id="Q5W6Y3">
    <property type="interactions" value="4"/>
</dbReference>
<dbReference type="GlyCosmos" id="Q5W6Y3">
    <property type="glycosylation" value="3 sites, No reported glycans"/>
</dbReference>
<dbReference type="PaxDb" id="39947-Q5W6Y3"/>
<dbReference type="EnsemblPlants" id="Os05t0356700-01">
    <property type="protein sequence ID" value="Os05t0356700-01"/>
    <property type="gene ID" value="Os05g0356700"/>
</dbReference>
<dbReference type="GeneID" id="4338521"/>
<dbReference type="Gramene" id="Os05t0356700-01">
    <property type="protein sequence ID" value="Os05t0356700-01"/>
    <property type="gene ID" value="Os05g0356700"/>
</dbReference>
<dbReference type="KEGG" id="dosa:Os05g0356700"/>
<dbReference type="KEGG" id="osa:4338521"/>
<dbReference type="eggNOG" id="ENOG502QTQP">
    <property type="taxonomic scope" value="Eukaryota"/>
</dbReference>
<dbReference type="HOGENOM" id="CLU_020953_3_1_1"/>
<dbReference type="InParanoid" id="Q5W6Y3"/>
<dbReference type="OMA" id="DGPWESA"/>
<dbReference type="OrthoDB" id="1932925at2759"/>
<dbReference type="Proteomes" id="UP000000763">
    <property type="component" value="Chromosome 5"/>
</dbReference>
<dbReference type="Proteomes" id="UP000059680">
    <property type="component" value="Chromosome 5"/>
</dbReference>
<dbReference type="GO" id="GO:0005794">
    <property type="term" value="C:Golgi apparatus"/>
    <property type="evidence" value="ECO:0000318"/>
    <property type="project" value="GO_Central"/>
</dbReference>
<dbReference type="GO" id="GO:0000139">
    <property type="term" value="C:Golgi membrane"/>
    <property type="evidence" value="ECO:0000250"/>
    <property type="project" value="UniProtKB"/>
</dbReference>
<dbReference type="GO" id="GO:0016413">
    <property type="term" value="F:O-acetyltransferase activity"/>
    <property type="evidence" value="ECO:0000318"/>
    <property type="project" value="GO_Central"/>
</dbReference>
<dbReference type="GO" id="GO:1990538">
    <property type="term" value="F:xylan O-acetyltransferase activity"/>
    <property type="evidence" value="ECO:0000314"/>
    <property type="project" value="UniProtKB"/>
</dbReference>
<dbReference type="GO" id="GO:1990937">
    <property type="term" value="P:xylan acetylation"/>
    <property type="evidence" value="ECO:0000314"/>
    <property type="project" value="UniProtKB"/>
</dbReference>
<dbReference type="InterPro" id="IPR029962">
    <property type="entry name" value="TBL"/>
</dbReference>
<dbReference type="InterPro" id="IPR026057">
    <property type="entry name" value="TBL_C"/>
</dbReference>
<dbReference type="InterPro" id="IPR025846">
    <property type="entry name" value="TBL_N"/>
</dbReference>
<dbReference type="PANTHER" id="PTHR32285">
    <property type="entry name" value="PROTEIN TRICHOME BIREFRINGENCE-LIKE 9-RELATED"/>
    <property type="match status" value="1"/>
</dbReference>
<dbReference type="PANTHER" id="PTHR32285:SF370">
    <property type="entry name" value="XYLAN O-ACETYLTRANSFERASE 9-RELATED"/>
    <property type="match status" value="1"/>
</dbReference>
<dbReference type="Pfam" id="PF13839">
    <property type="entry name" value="PC-Esterase"/>
    <property type="match status" value="1"/>
</dbReference>
<dbReference type="Pfam" id="PF14416">
    <property type="entry name" value="PMR5N"/>
    <property type="match status" value="1"/>
</dbReference>
<name>XOAT9_ORYSJ</name>
<keyword id="KW-1015">Disulfide bond</keyword>
<keyword id="KW-0325">Glycoprotein</keyword>
<keyword id="KW-0333">Golgi apparatus</keyword>
<keyword id="KW-0472">Membrane</keyword>
<keyword id="KW-1185">Reference proteome</keyword>
<keyword id="KW-0735">Signal-anchor</keyword>
<keyword id="KW-0808">Transferase</keyword>
<keyword id="KW-0812">Transmembrane</keyword>
<keyword id="KW-1133">Transmembrane helix</keyword>
<protein>
    <recommendedName>
        <fullName evidence="7">Probable xylan O-acetyltransferase 9</fullName>
        <ecNumber evidence="5">2.3.1.-</ecNumber>
    </recommendedName>
    <alternativeName>
        <fullName evidence="6">Protein trichome birefringence-like 4</fullName>
        <shortName evidence="6">OsTBL4</shortName>
    </alternativeName>
</protein>
<feature type="chain" id="PRO_0000454033" description="Probable xylan O-acetyltransferase 9">
    <location>
        <begin position="1"/>
        <end position="454"/>
    </location>
</feature>
<feature type="topological domain" description="Cytoplasmic" evidence="8">
    <location>
        <begin position="1"/>
        <end position="15"/>
    </location>
</feature>
<feature type="transmembrane region" description="Helical; Signal-anchor for type II membrane protein" evidence="3">
    <location>
        <begin position="16"/>
        <end position="36"/>
    </location>
</feature>
<feature type="topological domain" description="Lumenal" evidence="8">
    <location>
        <begin position="37"/>
        <end position="454"/>
    </location>
</feature>
<feature type="short sequence motif" description="GDS motif" evidence="2">
    <location>
        <begin position="175"/>
        <end position="177"/>
    </location>
</feature>
<feature type="short sequence motif" description="DXXH motif" evidence="9">
    <location>
        <begin position="430"/>
        <end position="433"/>
    </location>
</feature>
<feature type="active site" description="Nucleophile" evidence="9">
    <location>
        <position position="177"/>
    </location>
</feature>
<feature type="active site" description="Proton donor" evidence="2">
    <location>
        <position position="430"/>
    </location>
</feature>
<feature type="active site" description="Proton acceptor" evidence="2">
    <location>
        <position position="433"/>
    </location>
</feature>
<feature type="glycosylation site" description="N-linked (GlcNAc...) asparagine" evidence="4">
    <location>
        <position position="219"/>
    </location>
</feature>
<feature type="glycosylation site" description="N-linked (GlcNAc...) asparagine" evidence="4">
    <location>
        <position position="293"/>
    </location>
</feature>
<feature type="glycosylation site" description="N-linked (GlcNAc...) asparagine" evidence="4">
    <location>
        <position position="394"/>
    </location>
</feature>
<feature type="disulfide bond" evidence="2">
    <location>
        <begin position="101"/>
        <end position="152"/>
    </location>
</feature>
<feature type="disulfide bond" evidence="2">
    <location>
        <begin position="123"/>
        <end position="188"/>
    </location>
</feature>
<feature type="disulfide bond" evidence="2">
    <location>
        <begin position="132"/>
        <end position="435"/>
    </location>
</feature>
<feature type="disulfide bond" evidence="2">
    <location>
        <begin position="352"/>
        <end position="431"/>
    </location>
</feature>
<reference key="1">
    <citation type="journal article" date="2018" name="Planta">
        <title>Biochemical characterization of rice xylan O-acetyltransferases.</title>
        <authorList>
            <person name="Zhong R."/>
            <person name="Cui D."/>
            <person name="Dasher R.L."/>
            <person name="Ye Z.H."/>
        </authorList>
    </citation>
    <scope>NUCLEOTIDE SEQUENCE [MRNA]</scope>
    <scope>FUNCTION</scope>
    <scope>CATALYTIC ACTIVITY</scope>
</reference>
<reference key="2">
    <citation type="journal article" date="2005" name="Mol. Genet. Genomics">
        <title>A fine physical map of the rice chromosome 5.</title>
        <authorList>
            <person name="Cheng C.-H."/>
            <person name="Chung M.C."/>
            <person name="Liu S.-M."/>
            <person name="Chen S.-K."/>
            <person name="Kao F.Y."/>
            <person name="Lin S.-J."/>
            <person name="Hsiao S.-H."/>
            <person name="Tseng I.C."/>
            <person name="Hsing Y.-I.C."/>
            <person name="Wu H.-P."/>
            <person name="Chen C.-S."/>
            <person name="Shaw J.-F."/>
            <person name="Wu J."/>
            <person name="Matsumoto T."/>
            <person name="Sasaki T."/>
            <person name="Chen H.-C."/>
            <person name="Chow T.-Y."/>
        </authorList>
    </citation>
    <scope>NUCLEOTIDE SEQUENCE [LARGE SCALE GENOMIC DNA]</scope>
    <source>
        <strain>cv. Nipponbare</strain>
    </source>
</reference>
<reference key="3">
    <citation type="journal article" date="2005" name="Nature">
        <title>The map-based sequence of the rice genome.</title>
        <authorList>
            <consortium name="International rice genome sequencing project (IRGSP)"/>
        </authorList>
    </citation>
    <scope>NUCLEOTIDE SEQUENCE [LARGE SCALE GENOMIC DNA]</scope>
    <source>
        <strain>cv. Nipponbare</strain>
    </source>
</reference>
<reference key="4">
    <citation type="journal article" date="2008" name="Nucleic Acids Res.">
        <title>The rice annotation project database (RAP-DB): 2008 update.</title>
        <authorList>
            <consortium name="The rice annotation project (RAP)"/>
        </authorList>
    </citation>
    <scope>GENOME REANNOTATION</scope>
    <source>
        <strain>cv. Nipponbare</strain>
    </source>
</reference>
<reference key="5">
    <citation type="journal article" date="2013" name="Rice">
        <title>Improvement of the Oryza sativa Nipponbare reference genome using next generation sequence and optical map data.</title>
        <authorList>
            <person name="Kawahara Y."/>
            <person name="de la Bastide M."/>
            <person name="Hamilton J.P."/>
            <person name="Kanamori H."/>
            <person name="McCombie W.R."/>
            <person name="Ouyang S."/>
            <person name="Schwartz D.C."/>
            <person name="Tanaka T."/>
            <person name="Wu J."/>
            <person name="Zhou S."/>
            <person name="Childs K.L."/>
            <person name="Davidson R.M."/>
            <person name="Lin H."/>
            <person name="Quesada-Ocampo L."/>
            <person name="Vaillancourt B."/>
            <person name="Sakai H."/>
            <person name="Lee S.S."/>
            <person name="Kim J."/>
            <person name="Numa H."/>
            <person name="Itoh T."/>
            <person name="Buell C.R."/>
            <person name="Matsumoto T."/>
        </authorList>
    </citation>
    <scope>GENOME REANNOTATION</scope>
    <source>
        <strain>cv. Nipponbare</strain>
    </source>
</reference>
<reference key="6">
    <citation type="journal article" date="2017" name="Plant Physiol.">
        <title>Two trichome birefringence-like proteins mediate xylan acetylation, which is essential for leaf blight resistance in rice.</title>
        <authorList>
            <person name="Gao Y."/>
            <person name="He C."/>
            <person name="Zhang D."/>
            <person name="Liu X."/>
            <person name="Xu Z."/>
            <person name="Tian Y."/>
            <person name="Liu X.H."/>
            <person name="Zang S."/>
            <person name="Pauly M."/>
            <person name="Zhou Y."/>
            <person name="Zhang B."/>
        </authorList>
    </citation>
    <scope>GENE FAMILY</scope>
    <scope>NOMENCLATURE</scope>
</reference>